<feature type="initiator methionine" description="Removed" evidence="1">
    <location>
        <position position="1"/>
    </location>
</feature>
<feature type="chain" id="PRO_0000443237" description="Serine/threonine-protein kinase BSK7">
    <location>
        <begin position="2"/>
        <end position="487"/>
    </location>
</feature>
<feature type="domain" description="Protein kinase" evidence="2">
    <location>
        <begin position="59"/>
        <end position="325"/>
    </location>
</feature>
<feature type="active site" description="Proton acceptor" evidence="2">
    <location>
        <position position="181"/>
    </location>
</feature>
<feature type="binding site" evidence="2">
    <location>
        <begin position="65"/>
        <end position="73"/>
    </location>
    <ligand>
        <name>ATP</name>
        <dbReference type="ChEBI" id="CHEBI:30616"/>
    </ligand>
</feature>
<feature type="binding site" evidence="2">
    <location>
        <position position="87"/>
    </location>
    <ligand>
        <name>ATP</name>
        <dbReference type="ChEBI" id="CHEBI:30616"/>
    </ligand>
</feature>
<feature type="lipid moiety-binding region" description="N-myristoyl glycine" evidence="1">
    <location>
        <position position="2"/>
    </location>
</feature>
<gene>
    <name evidence="4" type="primary">BSK7</name>
    <name evidence="6" type="ordered locus">At1g63500</name>
    <name evidence="7" type="ORF">F2K11.13</name>
</gene>
<dbReference type="EC" id="2.7.11.1" evidence="5"/>
<dbReference type="EMBL" id="AC008047">
    <property type="protein sequence ID" value="AAF19710.1"/>
    <property type="status" value="ALT_SEQ"/>
    <property type="molecule type" value="Genomic_DNA"/>
</dbReference>
<dbReference type="EMBL" id="CP002684">
    <property type="protein sequence ID" value="AEE34106.1"/>
    <property type="molecule type" value="Genomic_DNA"/>
</dbReference>
<dbReference type="RefSeq" id="NP_176539.4">
    <property type="nucleotide sequence ID" value="NM_105029.7"/>
</dbReference>
<dbReference type="SMR" id="F4I3M3"/>
<dbReference type="FunCoup" id="F4I3M3">
    <property type="interactions" value="1952"/>
</dbReference>
<dbReference type="STRING" id="3702.F4I3M3"/>
<dbReference type="iPTMnet" id="F4I3M3"/>
<dbReference type="SwissPalm" id="F4I3M3"/>
<dbReference type="PaxDb" id="3702-AT1G63500.1"/>
<dbReference type="ProteomicsDB" id="240438"/>
<dbReference type="EnsemblPlants" id="AT1G63500.1">
    <property type="protein sequence ID" value="AT1G63500.1"/>
    <property type="gene ID" value="AT1G63500"/>
</dbReference>
<dbReference type="GeneID" id="842656"/>
<dbReference type="Gramene" id="AT1G63500.1">
    <property type="protein sequence ID" value="AT1G63500.1"/>
    <property type="gene ID" value="AT1G63500"/>
</dbReference>
<dbReference type="KEGG" id="ath:AT1G63500"/>
<dbReference type="Araport" id="AT1G63500"/>
<dbReference type="TAIR" id="AT1G63500">
    <property type="gene designation" value="BSK7"/>
</dbReference>
<dbReference type="eggNOG" id="ENOG502QSE9">
    <property type="taxonomic scope" value="Eukaryota"/>
</dbReference>
<dbReference type="HOGENOM" id="CLU_000288_15_0_1"/>
<dbReference type="InParanoid" id="F4I3M3"/>
<dbReference type="OMA" id="DCFTQFI"/>
<dbReference type="OrthoDB" id="2335338at2759"/>
<dbReference type="PRO" id="PR:F4I3M3"/>
<dbReference type="Proteomes" id="UP000006548">
    <property type="component" value="Chromosome 1"/>
</dbReference>
<dbReference type="ExpressionAtlas" id="F4I3M3">
    <property type="expression patterns" value="baseline and differential"/>
</dbReference>
<dbReference type="GO" id="GO:0005634">
    <property type="term" value="C:nucleus"/>
    <property type="evidence" value="ECO:0007005"/>
    <property type="project" value="TAIR"/>
</dbReference>
<dbReference type="GO" id="GO:0005886">
    <property type="term" value="C:plasma membrane"/>
    <property type="evidence" value="ECO:0007005"/>
    <property type="project" value="TAIR"/>
</dbReference>
<dbReference type="GO" id="GO:0009506">
    <property type="term" value="C:plasmodesma"/>
    <property type="evidence" value="ECO:0007005"/>
    <property type="project" value="TAIR"/>
</dbReference>
<dbReference type="GO" id="GO:0005524">
    <property type="term" value="F:ATP binding"/>
    <property type="evidence" value="ECO:0007669"/>
    <property type="project" value="UniProtKB-KW"/>
</dbReference>
<dbReference type="GO" id="GO:0106310">
    <property type="term" value="F:protein serine kinase activity"/>
    <property type="evidence" value="ECO:0007669"/>
    <property type="project" value="RHEA"/>
</dbReference>
<dbReference type="GO" id="GO:0004674">
    <property type="term" value="F:protein serine/threonine kinase activity"/>
    <property type="evidence" value="ECO:0007669"/>
    <property type="project" value="UniProtKB-KW"/>
</dbReference>
<dbReference type="GO" id="GO:0009742">
    <property type="term" value="P:brassinosteroid mediated signaling pathway"/>
    <property type="evidence" value="ECO:0000315"/>
    <property type="project" value="UniProtKB"/>
</dbReference>
<dbReference type="FunFam" id="1.25.40.10:FF:000016">
    <property type="entry name" value="probable serine/threonine-protein kinase At4g35230"/>
    <property type="match status" value="1"/>
</dbReference>
<dbReference type="FunFam" id="3.30.200.20:FF:000154">
    <property type="entry name" value="probable serine/threonine-protein kinase At4g35230"/>
    <property type="match status" value="1"/>
</dbReference>
<dbReference type="FunFam" id="1.10.510.10:FF:000069">
    <property type="entry name" value="probable serine/threonine-protein kinase At5g41260"/>
    <property type="match status" value="1"/>
</dbReference>
<dbReference type="Gene3D" id="3.30.200.20">
    <property type="entry name" value="Phosphorylase Kinase, domain 1"/>
    <property type="match status" value="1"/>
</dbReference>
<dbReference type="Gene3D" id="1.25.40.10">
    <property type="entry name" value="Tetratricopeptide repeat domain"/>
    <property type="match status" value="1"/>
</dbReference>
<dbReference type="Gene3D" id="1.10.510.10">
    <property type="entry name" value="Transferase(Phosphotransferase) domain 1"/>
    <property type="match status" value="1"/>
</dbReference>
<dbReference type="InterPro" id="IPR045845">
    <property type="entry name" value="BSK"/>
</dbReference>
<dbReference type="InterPro" id="IPR011009">
    <property type="entry name" value="Kinase-like_dom_sf"/>
</dbReference>
<dbReference type="InterPro" id="IPR000719">
    <property type="entry name" value="Prot_kinase_dom"/>
</dbReference>
<dbReference type="InterPro" id="IPR001245">
    <property type="entry name" value="Ser-Thr/Tyr_kinase_cat_dom"/>
</dbReference>
<dbReference type="InterPro" id="IPR011990">
    <property type="entry name" value="TPR-like_helical_dom_sf"/>
</dbReference>
<dbReference type="PANTHER" id="PTHR45863">
    <property type="entry name" value="SERINE/THREONINE-PROTEIN KINASE BSK5"/>
    <property type="match status" value="1"/>
</dbReference>
<dbReference type="PANTHER" id="PTHR45863:SF2">
    <property type="entry name" value="SERINE_THREONINE-PROTEIN KINASE BSK7-RELATED"/>
    <property type="match status" value="1"/>
</dbReference>
<dbReference type="Pfam" id="PF07714">
    <property type="entry name" value="PK_Tyr_Ser-Thr"/>
    <property type="match status" value="1"/>
</dbReference>
<dbReference type="SUPFAM" id="SSF56112">
    <property type="entry name" value="Protein kinase-like (PK-like)"/>
    <property type="match status" value="1"/>
</dbReference>
<dbReference type="SUPFAM" id="SSF48452">
    <property type="entry name" value="TPR-like"/>
    <property type="match status" value="1"/>
</dbReference>
<dbReference type="PROSITE" id="PS50011">
    <property type="entry name" value="PROTEIN_KINASE_DOM"/>
    <property type="match status" value="1"/>
</dbReference>
<accession>F4I3M3</accession>
<accession>Q9SH35</accession>
<sequence length="487" mass="54798">MGCEVSKLCAFCCVSDPEGSNHGVTGLDEDRRGEGNDLPQFREFSIETLRNATSGFATENIVSEHGEKAPNVVYKGKLDNQRRIAVKRFNRKAWPDSRQFLEEAKAVGQLRNYRMANLLGCCYEGEERLLVAEFMPNETLAKHLFHWESQPMKWAMRLRVALHIAQALEYCTGKGRALYHDLNAYRVLFDDDSNPRLSCFGLMKNSRDGKSYSTNLAFTPPEYLRTGRVTPESVMYSYGTLLLDLLSGKHIPPSHALDLIRDRNIQMLIDSCLEGQFSSDDGTELIRLASRCLQYEPRERPNPKSLVTAMIPLQKDLETPSHQLMGIPSSASTTPLSPLGEACLRTDLTAIHEILEKLSYKDDEGAATELSFQMWTNQMQDSLNFKKKGDVAFRHKEFANAIDCYSQFIEGGTMVSPTVYARRSLCYLMNEMPQEALNDAMQAQVISPAWHIASYLQAVALSALGQENEAHAALKDGSMLESKRNRL</sequence>
<evidence type="ECO:0000255" key="1"/>
<evidence type="ECO:0000255" key="2">
    <source>
        <dbReference type="PROSITE-ProRule" id="PRU00159"/>
    </source>
</evidence>
<evidence type="ECO:0000269" key="3">
    <source>
    </source>
</evidence>
<evidence type="ECO:0000303" key="4">
    <source>
    </source>
</evidence>
<evidence type="ECO:0000305" key="5"/>
<evidence type="ECO:0000312" key="6">
    <source>
        <dbReference type="Araport" id="AT1G63500"/>
    </source>
</evidence>
<evidence type="ECO:0000312" key="7">
    <source>
        <dbReference type="EMBL" id="AEE34106.1"/>
    </source>
</evidence>
<keyword id="KW-0067">ATP-binding</keyword>
<keyword id="KW-1070">Brassinosteroid signaling pathway</keyword>
<keyword id="KW-1003">Cell membrane</keyword>
<keyword id="KW-0418">Kinase</keyword>
<keyword id="KW-0449">Lipoprotein</keyword>
<keyword id="KW-0472">Membrane</keyword>
<keyword id="KW-0519">Myristate</keyword>
<keyword id="KW-0547">Nucleotide-binding</keyword>
<keyword id="KW-1185">Reference proteome</keyword>
<keyword id="KW-0723">Serine/threonine-protein kinase</keyword>
<keyword id="KW-0808">Transferase</keyword>
<proteinExistence type="inferred from homology"/>
<reference key="1">
    <citation type="journal article" date="2000" name="Nature">
        <title>Sequence and analysis of chromosome 1 of the plant Arabidopsis thaliana.</title>
        <authorList>
            <person name="Theologis A."/>
            <person name="Ecker J.R."/>
            <person name="Palm C.J."/>
            <person name="Federspiel N.A."/>
            <person name="Kaul S."/>
            <person name="White O."/>
            <person name="Alonso J."/>
            <person name="Altafi H."/>
            <person name="Araujo R."/>
            <person name="Bowman C.L."/>
            <person name="Brooks S.Y."/>
            <person name="Buehler E."/>
            <person name="Chan A."/>
            <person name="Chao Q."/>
            <person name="Chen H."/>
            <person name="Cheuk R.F."/>
            <person name="Chin C.W."/>
            <person name="Chung M.K."/>
            <person name="Conn L."/>
            <person name="Conway A.B."/>
            <person name="Conway A.R."/>
            <person name="Creasy T.H."/>
            <person name="Dewar K."/>
            <person name="Dunn P."/>
            <person name="Etgu P."/>
            <person name="Feldblyum T.V."/>
            <person name="Feng J.-D."/>
            <person name="Fong B."/>
            <person name="Fujii C.Y."/>
            <person name="Gill J.E."/>
            <person name="Goldsmith A.D."/>
            <person name="Haas B."/>
            <person name="Hansen N.F."/>
            <person name="Hughes B."/>
            <person name="Huizar L."/>
            <person name="Hunter J.L."/>
            <person name="Jenkins J."/>
            <person name="Johnson-Hopson C."/>
            <person name="Khan S."/>
            <person name="Khaykin E."/>
            <person name="Kim C.J."/>
            <person name="Koo H.L."/>
            <person name="Kremenetskaia I."/>
            <person name="Kurtz D.B."/>
            <person name="Kwan A."/>
            <person name="Lam B."/>
            <person name="Langin-Hooper S."/>
            <person name="Lee A."/>
            <person name="Lee J.M."/>
            <person name="Lenz C.A."/>
            <person name="Li J.H."/>
            <person name="Li Y.-P."/>
            <person name="Lin X."/>
            <person name="Liu S.X."/>
            <person name="Liu Z.A."/>
            <person name="Luros J.S."/>
            <person name="Maiti R."/>
            <person name="Marziali A."/>
            <person name="Militscher J."/>
            <person name="Miranda M."/>
            <person name="Nguyen M."/>
            <person name="Nierman W.C."/>
            <person name="Osborne B.I."/>
            <person name="Pai G."/>
            <person name="Peterson J."/>
            <person name="Pham P.K."/>
            <person name="Rizzo M."/>
            <person name="Rooney T."/>
            <person name="Rowley D."/>
            <person name="Sakano H."/>
            <person name="Salzberg S.L."/>
            <person name="Schwartz J.R."/>
            <person name="Shinn P."/>
            <person name="Southwick A.M."/>
            <person name="Sun H."/>
            <person name="Tallon L.J."/>
            <person name="Tambunga G."/>
            <person name="Toriumi M.J."/>
            <person name="Town C.D."/>
            <person name="Utterback T."/>
            <person name="Van Aken S."/>
            <person name="Vaysberg M."/>
            <person name="Vysotskaia V.S."/>
            <person name="Walker M."/>
            <person name="Wu D."/>
            <person name="Yu G."/>
            <person name="Fraser C.M."/>
            <person name="Venter J.C."/>
            <person name="Davis R.W."/>
        </authorList>
    </citation>
    <scope>NUCLEOTIDE SEQUENCE [LARGE SCALE GENOMIC DNA]</scope>
    <source>
        <strain>cv. Columbia</strain>
    </source>
</reference>
<reference key="2">
    <citation type="journal article" date="2017" name="Plant J.">
        <title>Araport11: a complete reannotation of the Arabidopsis thaliana reference genome.</title>
        <authorList>
            <person name="Cheng C.Y."/>
            <person name="Krishnakumar V."/>
            <person name="Chan A.P."/>
            <person name="Thibaud-Nissen F."/>
            <person name="Schobel S."/>
            <person name="Town C.D."/>
        </authorList>
    </citation>
    <scope>GENOME REANNOTATION</scope>
    <source>
        <strain>cv. Columbia</strain>
    </source>
</reference>
<reference key="3">
    <citation type="journal article" date="2013" name="Plant J.">
        <title>BSKs are partially redundant positive regulators of brassinosteroid signaling in Arabidopsis.</title>
        <authorList>
            <person name="Sreeramulu S."/>
            <person name="Mostizky Y."/>
            <person name="Sunitha S."/>
            <person name="Shani E."/>
            <person name="Nahum H."/>
            <person name="Salomon D."/>
            <person name="Hayun L.B."/>
            <person name="Gruetter C."/>
            <person name="Rauh D."/>
            <person name="Ori N."/>
            <person name="Sessa G."/>
        </authorList>
    </citation>
    <scope>FUNCTION</scope>
</reference>
<name>BSK7_ARATH</name>
<organism>
    <name type="scientific">Arabidopsis thaliana</name>
    <name type="common">Mouse-ear cress</name>
    <dbReference type="NCBI Taxonomy" id="3702"/>
    <lineage>
        <taxon>Eukaryota</taxon>
        <taxon>Viridiplantae</taxon>
        <taxon>Streptophyta</taxon>
        <taxon>Embryophyta</taxon>
        <taxon>Tracheophyta</taxon>
        <taxon>Spermatophyta</taxon>
        <taxon>Magnoliopsida</taxon>
        <taxon>eudicotyledons</taxon>
        <taxon>Gunneridae</taxon>
        <taxon>Pentapetalae</taxon>
        <taxon>rosids</taxon>
        <taxon>malvids</taxon>
        <taxon>Brassicales</taxon>
        <taxon>Brassicaceae</taxon>
        <taxon>Camelineae</taxon>
        <taxon>Arabidopsis</taxon>
    </lineage>
</organism>
<protein>
    <recommendedName>
        <fullName evidence="5">Serine/threonine-protein kinase BSK7</fullName>
        <ecNumber evidence="5">2.7.11.1</ecNumber>
    </recommendedName>
    <alternativeName>
        <fullName evidence="4">Brassinosteroid-signaling kinase 7</fullName>
    </alternativeName>
</protein>
<comment type="function">
    <text evidence="3">Probable serine/threonine kinase that acts as a positive regulator of brassinosteroid (BR) signaling downstream of the receptor kinase BRI1. Functions redundantly with BSK3, BSK5, BSK6 and BSK8.</text>
</comment>
<comment type="catalytic activity">
    <reaction evidence="5">
        <text>L-seryl-[protein] + ATP = O-phospho-L-seryl-[protein] + ADP + H(+)</text>
        <dbReference type="Rhea" id="RHEA:17989"/>
        <dbReference type="Rhea" id="RHEA-COMP:9863"/>
        <dbReference type="Rhea" id="RHEA-COMP:11604"/>
        <dbReference type="ChEBI" id="CHEBI:15378"/>
        <dbReference type="ChEBI" id="CHEBI:29999"/>
        <dbReference type="ChEBI" id="CHEBI:30616"/>
        <dbReference type="ChEBI" id="CHEBI:83421"/>
        <dbReference type="ChEBI" id="CHEBI:456216"/>
        <dbReference type="EC" id="2.7.11.1"/>
    </reaction>
</comment>
<comment type="catalytic activity">
    <reaction evidence="5">
        <text>L-threonyl-[protein] + ATP = O-phospho-L-threonyl-[protein] + ADP + H(+)</text>
        <dbReference type="Rhea" id="RHEA:46608"/>
        <dbReference type="Rhea" id="RHEA-COMP:11060"/>
        <dbReference type="Rhea" id="RHEA-COMP:11605"/>
        <dbReference type="ChEBI" id="CHEBI:15378"/>
        <dbReference type="ChEBI" id="CHEBI:30013"/>
        <dbReference type="ChEBI" id="CHEBI:30616"/>
        <dbReference type="ChEBI" id="CHEBI:61977"/>
        <dbReference type="ChEBI" id="CHEBI:456216"/>
        <dbReference type="EC" id="2.7.11.1"/>
    </reaction>
</comment>
<comment type="subcellular location">
    <subcellularLocation>
        <location evidence="1">Cell membrane</location>
        <topology evidence="1">Lipid-anchor</topology>
    </subcellularLocation>
</comment>
<comment type="similarity">
    <text evidence="5">Belongs to the protein kinase superfamily. Ser/Thr protein kinase family.</text>
</comment>
<comment type="sequence caution" evidence="5">
    <conflict type="erroneous gene model prediction">
        <sequence resource="EMBL-CDS" id="AAF19710"/>
    </conflict>
</comment>